<organism>
    <name type="scientific">Thermus aquaticus</name>
    <dbReference type="NCBI Taxonomy" id="271"/>
    <lineage>
        <taxon>Bacteria</taxon>
        <taxon>Thermotogati</taxon>
        <taxon>Deinococcota</taxon>
        <taxon>Deinococci</taxon>
        <taxon>Thermales</taxon>
        <taxon>Thermaceae</taxon>
        <taxon>Thermus</taxon>
    </lineage>
</organism>
<sequence length="27" mass="3337">MGKGDRRTRRGKIWRGTYGKYRPRKKK</sequence>
<evidence type="ECO:0000250" key="1"/>
<evidence type="ECO:0000256" key="2">
    <source>
        <dbReference type="SAM" id="MobiDB-lite"/>
    </source>
</evidence>
<evidence type="ECO:0000269" key="3">
    <source>
    </source>
</evidence>
<evidence type="ECO:0000305" key="4"/>
<protein>
    <recommendedName>
        <fullName evidence="4">Small ribosomal subunit protein bTHX</fullName>
    </recommendedName>
    <alternativeName>
        <fullName>30S ribosomal protein Thx</fullName>
    </alternativeName>
</protein>
<dbReference type="PIR" id="S33869">
    <property type="entry name" value="S33869"/>
</dbReference>
<dbReference type="PDB" id="6CFL">
    <property type="method" value="X-ray"/>
    <property type="resolution" value="2.60 A"/>
    <property type="chains" value="1u/2u=1-27"/>
</dbReference>
<dbReference type="PDBsum" id="6CFL"/>
<dbReference type="SMR" id="P62611"/>
<dbReference type="GO" id="GO:1990904">
    <property type="term" value="C:ribonucleoprotein complex"/>
    <property type="evidence" value="ECO:0007669"/>
    <property type="project" value="UniProtKB-KW"/>
</dbReference>
<dbReference type="GO" id="GO:0005840">
    <property type="term" value="C:ribosome"/>
    <property type="evidence" value="ECO:0007669"/>
    <property type="project" value="UniProtKB-KW"/>
</dbReference>
<dbReference type="GO" id="GO:0019843">
    <property type="term" value="F:rRNA binding"/>
    <property type="evidence" value="ECO:0007669"/>
    <property type="project" value="UniProtKB-KW"/>
</dbReference>
<dbReference type="InterPro" id="IPR031414">
    <property type="entry name" value="Ribosomal_bTHX"/>
</dbReference>
<dbReference type="InterPro" id="IPR030826">
    <property type="entry name" value="Ribosomal_bTHX/bTHXc/bTHXm"/>
</dbReference>
<dbReference type="NCBIfam" id="NF011339">
    <property type="entry name" value="PRK14753.1"/>
    <property type="match status" value="1"/>
</dbReference>
<dbReference type="NCBIfam" id="TIGR04560">
    <property type="entry name" value="ribo_THX"/>
    <property type="match status" value="1"/>
</dbReference>
<dbReference type="Pfam" id="PF17070">
    <property type="entry name" value="Thx"/>
    <property type="match status" value="1"/>
</dbReference>
<keyword id="KW-0002">3D-structure</keyword>
<keyword id="KW-0903">Direct protein sequencing</keyword>
<keyword id="KW-0687">Ribonucleoprotein</keyword>
<keyword id="KW-0689">Ribosomal protein</keyword>
<keyword id="KW-0694">RNA-binding</keyword>
<keyword id="KW-0699">rRNA-binding</keyword>
<feature type="initiator methionine" description="Removed" evidence="3">
    <location>
        <position position="1"/>
    </location>
</feature>
<feature type="chain" id="PRO_0000217199" description="Small ribosomal subunit protein bTHX">
    <location>
        <begin position="2"/>
        <end position="27"/>
    </location>
</feature>
<feature type="region of interest" description="Disordered" evidence="2">
    <location>
        <begin position="1"/>
        <end position="27"/>
    </location>
</feature>
<feature type="compositionally biased region" description="Basic residues" evidence="2">
    <location>
        <begin position="1"/>
        <end position="13"/>
    </location>
</feature>
<name>RSHX_THEAQ</name>
<accession>P62611</accession>
<accession>P32193</accession>
<accession>P80383</accession>
<accession>Q9F2A8</accession>
<reference key="1">
    <citation type="journal article" date="1993" name="Biol. Chem. Hoppe-Seyler">
        <title>Isolation and characterization of a new ribosomal protein from the thermophilic eubacteria, Thermus thermophilus, T. aquaticus and T. flavus.</title>
        <authorList>
            <person name="Choli T."/>
            <person name="Franceschi F."/>
            <person name="Yonath A."/>
            <person name="Wittmann-Liebold B."/>
        </authorList>
    </citation>
    <scope>PROTEIN SEQUENCE OF 2-27</scope>
    <source>
        <strain>EP 00276</strain>
    </source>
</reference>
<gene>
    <name type="primary">rpsU</name>
</gene>
<comment type="function">
    <text evidence="1">Binds at the top of the head of the 30S subunit. It stabilizes a number of different RNA elements and thus is important for subunit structure (By similarity).</text>
</comment>
<comment type="subunit">
    <text>Part of the 30S ribosomal subunit.</text>
</comment>
<comment type="similarity">
    <text evidence="4">Belongs to the bacterial ribosomal protein bTHX family.</text>
</comment>
<proteinExistence type="evidence at protein level"/>